<comment type="function">
    <text>Removal of H(2)O(2), oxidation of toxic reductants, biosynthesis and degradation of lignin, suberization, auxin catabolism, response to environmental stresses such as wounding, pathogen attack and oxidative stress. These functions might be dependent on each isozyme/isoform in each plant tissue.</text>
</comment>
<comment type="catalytic activity">
    <reaction>
        <text>2 a phenolic donor + H2O2 = 2 a phenolic radical donor + 2 H2O</text>
        <dbReference type="Rhea" id="RHEA:56136"/>
        <dbReference type="ChEBI" id="CHEBI:15377"/>
        <dbReference type="ChEBI" id="CHEBI:16240"/>
        <dbReference type="ChEBI" id="CHEBI:139520"/>
        <dbReference type="ChEBI" id="CHEBI:139521"/>
        <dbReference type="EC" id="1.11.1.7"/>
    </reaction>
</comment>
<comment type="cofactor">
    <cofactor evidence="2">
        <name>heme b</name>
        <dbReference type="ChEBI" id="CHEBI:60344"/>
    </cofactor>
    <text evidence="2">Binds 1 heme b (iron(II)-protoporphyrin IX) group per subunit.</text>
</comment>
<comment type="cofactor">
    <cofactor evidence="2">
        <name>Ca(2+)</name>
        <dbReference type="ChEBI" id="CHEBI:29108"/>
    </cofactor>
    <text evidence="2">Binds 2 calcium ions per subunit.</text>
</comment>
<comment type="subcellular location">
    <subcellularLocation>
        <location evidence="2">Secreted</location>
    </subcellularLocation>
</comment>
<comment type="miscellaneous">
    <text>There are 73 peroxidase genes in A.thaliana.</text>
</comment>
<comment type="similarity">
    <text evidence="2">Belongs to the peroxidase family. Classical plant (class III) peroxidase subfamily.</text>
</comment>
<organism>
    <name type="scientific">Arabidopsis thaliana</name>
    <name type="common">Mouse-ear cress</name>
    <dbReference type="NCBI Taxonomy" id="3702"/>
    <lineage>
        <taxon>Eukaryota</taxon>
        <taxon>Viridiplantae</taxon>
        <taxon>Streptophyta</taxon>
        <taxon>Embryophyta</taxon>
        <taxon>Tracheophyta</taxon>
        <taxon>Spermatophyta</taxon>
        <taxon>Magnoliopsida</taxon>
        <taxon>eudicotyledons</taxon>
        <taxon>Gunneridae</taxon>
        <taxon>Pentapetalae</taxon>
        <taxon>rosids</taxon>
        <taxon>malvids</taxon>
        <taxon>Brassicales</taxon>
        <taxon>Brassicaceae</taxon>
        <taxon>Camelineae</taxon>
        <taxon>Arabidopsis</taxon>
    </lineage>
</organism>
<accession>Q9SI17</accession>
<evidence type="ECO:0000255" key="1"/>
<evidence type="ECO:0000255" key="2">
    <source>
        <dbReference type="PROSITE-ProRule" id="PRU00297"/>
    </source>
</evidence>
<evidence type="ECO:0000255" key="3">
    <source>
        <dbReference type="PROSITE-ProRule" id="PRU10012"/>
    </source>
</evidence>
<sequence>MARIGSFLILLSLTYALTLCICDNASNFGGNKRNLFPDFYRSSCPRAEEIVRSVVAKAFERETRMAASLMRLHFHDCFVQGCDGSLLLDTSGSIVTEKNSNPNSRSARGFEVVDEIKAALENECPNTVSCADALTLAARDSSVLTGGPSWTVPLGRRDSATASRAKPNKDLPEPDNLFDTIFLRFSNEGLNLTDLVALSGSHTIGFSRCTSFRQRLYNQSGSGSPDTTLEKSYAAILRQRCPRSGGDQNLSELDINSAGRFDNSYFKNLIENMGLLNSDQVLFSSNEQSRELVKKYAEDQEEFFEQFAESMIKMGKISPLTGSSGEIRKKCRKINNS</sequence>
<reference key="1">
    <citation type="journal article" date="1999" name="Nature">
        <title>Sequence and analysis of chromosome 2 of the plant Arabidopsis thaliana.</title>
        <authorList>
            <person name="Lin X."/>
            <person name="Kaul S."/>
            <person name="Rounsley S.D."/>
            <person name="Shea T.P."/>
            <person name="Benito M.-I."/>
            <person name="Town C.D."/>
            <person name="Fujii C.Y."/>
            <person name="Mason T.M."/>
            <person name="Bowman C.L."/>
            <person name="Barnstead M.E."/>
            <person name="Feldblyum T.V."/>
            <person name="Buell C.R."/>
            <person name="Ketchum K.A."/>
            <person name="Lee J.J."/>
            <person name="Ronning C.M."/>
            <person name="Koo H.L."/>
            <person name="Moffat K.S."/>
            <person name="Cronin L.A."/>
            <person name="Shen M."/>
            <person name="Pai G."/>
            <person name="Van Aken S."/>
            <person name="Umayam L."/>
            <person name="Tallon L.J."/>
            <person name="Gill J.E."/>
            <person name="Adams M.D."/>
            <person name="Carrera A.J."/>
            <person name="Creasy T.H."/>
            <person name="Goodman H.M."/>
            <person name="Somerville C.R."/>
            <person name="Copenhaver G.P."/>
            <person name="Preuss D."/>
            <person name="Nierman W.C."/>
            <person name="White O."/>
            <person name="Eisen J.A."/>
            <person name="Salzberg S.L."/>
            <person name="Fraser C.M."/>
            <person name="Venter J.C."/>
        </authorList>
    </citation>
    <scope>NUCLEOTIDE SEQUENCE [LARGE SCALE GENOMIC DNA]</scope>
    <source>
        <strain>cv. Columbia</strain>
    </source>
</reference>
<reference key="2">
    <citation type="journal article" date="2017" name="Plant J.">
        <title>Araport11: a complete reannotation of the Arabidopsis thaliana reference genome.</title>
        <authorList>
            <person name="Cheng C.Y."/>
            <person name="Krishnakumar V."/>
            <person name="Chan A.P."/>
            <person name="Thibaud-Nissen F."/>
            <person name="Schobel S."/>
            <person name="Town C.D."/>
        </authorList>
    </citation>
    <scope>GENOME REANNOTATION</scope>
    <source>
        <strain>cv. Columbia</strain>
    </source>
</reference>
<reference key="3">
    <citation type="journal article" date="2002" name="Gene">
        <title>Analysis and expression of the class III peroxidase large gene family in Arabidopsis thaliana.</title>
        <authorList>
            <person name="Tognolli M."/>
            <person name="Penel C."/>
            <person name="Greppin H."/>
            <person name="Simon P."/>
        </authorList>
    </citation>
    <scope>GENE FAMILY ORGANIZATION</scope>
    <scope>NOMENCLATURE</scope>
    <source>
        <strain>cv. Columbia</strain>
    </source>
</reference>
<feature type="signal peptide" evidence="1">
    <location>
        <begin position="1"/>
        <end position="22"/>
    </location>
</feature>
<feature type="chain" id="PRO_0000023680" description="Peroxidase 14">
    <location>
        <begin position="23"/>
        <end position="337"/>
    </location>
</feature>
<feature type="active site" description="Proton acceptor" evidence="2 3">
    <location>
        <position position="75"/>
    </location>
</feature>
<feature type="binding site" evidence="2">
    <location>
        <position position="76"/>
    </location>
    <ligand>
        <name>Ca(2+)</name>
        <dbReference type="ChEBI" id="CHEBI:29108"/>
        <label>1</label>
    </ligand>
</feature>
<feature type="binding site" evidence="2">
    <location>
        <position position="79"/>
    </location>
    <ligand>
        <name>Ca(2+)</name>
        <dbReference type="ChEBI" id="CHEBI:29108"/>
        <label>1</label>
    </ligand>
</feature>
<feature type="binding site" evidence="2">
    <location>
        <position position="81"/>
    </location>
    <ligand>
        <name>Ca(2+)</name>
        <dbReference type="ChEBI" id="CHEBI:29108"/>
        <label>1</label>
    </ligand>
</feature>
<feature type="binding site" evidence="2">
    <location>
        <position position="83"/>
    </location>
    <ligand>
        <name>Ca(2+)</name>
        <dbReference type="ChEBI" id="CHEBI:29108"/>
        <label>1</label>
    </ligand>
</feature>
<feature type="binding site" evidence="2">
    <location>
        <position position="85"/>
    </location>
    <ligand>
        <name>Ca(2+)</name>
        <dbReference type="ChEBI" id="CHEBI:29108"/>
        <label>1</label>
    </ligand>
</feature>
<feature type="binding site" evidence="2">
    <location>
        <position position="172"/>
    </location>
    <ligand>
        <name>substrate</name>
    </ligand>
</feature>
<feature type="binding site" description="axial binding residue" evidence="2">
    <location>
        <position position="202"/>
    </location>
    <ligand>
        <name>heme b</name>
        <dbReference type="ChEBI" id="CHEBI:60344"/>
    </ligand>
    <ligandPart>
        <name>Fe</name>
        <dbReference type="ChEBI" id="CHEBI:18248"/>
    </ligandPart>
</feature>
<feature type="binding site" evidence="2">
    <location>
        <position position="203"/>
    </location>
    <ligand>
        <name>Ca(2+)</name>
        <dbReference type="ChEBI" id="CHEBI:29108"/>
        <label>2</label>
    </ligand>
</feature>
<feature type="binding site" evidence="2">
    <location>
        <position position="254"/>
    </location>
    <ligand>
        <name>Ca(2+)</name>
        <dbReference type="ChEBI" id="CHEBI:29108"/>
        <label>2</label>
    </ligand>
</feature>
<feature type="binding site" evidence="2">
    <location>
        <position position="257"/>
    </location>
    <ligand>
        <name>Ca(2+)</name>
        <dbReference type="ChEBI" id="CHEBI:29108"/>
        <label>2</label>
    </ligand>
</feature>
<feature type="binding site" evidence="2">
    <location>
        <position position="262"/>
    </location>
    <ligand>
        <name>Ca(2+)</name>
        <dbReference type="ChEBI" id="CHEBI:29108"/>
        <label>2</label>
    </ligand>
</feature>
<feature type="site" description="Transition state stabilizer" evidence="2">
    <location>
        <position position="71"/>
    </location>
</feature>
<feature type="glycosylation site" description="N-linked (GlcNAc...) asparagine" evidence="1">
    <location>
        <position position="24"/>
    </location>
</feature>
<feature type="glycosylation site" description="N-linked (GlcNAc...) asparagine" evidence="1">
    <location>
        <position position="191"/>
    </location>
</feature>
<feature type="glycosylation site" description="N-linked (GlcNAc...) asparagine" evidence="1">
    <location>
        <position position="218"/>
    </location>
</feature>
<feature type="glycosylation site" description="N-linked (GlcNAc...) asparagine" evidence="1">
    <location>
        <position position="249"/>
    </location>
</feature>
<feature type="disulfide bond" evidence="2">
    <location>
        <begin position="44"/>
        <end position="124"/>
    </location>
</feature>
<feature type="disulfide bond" evidence="2">
    <location>
        <begin position="77"/>
        <end position="82"/>
    </location>
</feature>
<feature type="disulfide bond" evidence="2">
    <location>
        <begin position="130"/>
        <end position="331"/>
    </location>
</feature>
<feature type="disulfide bond" evidence="2">
    <location>
        <begin position="209"/>
        <end position="241"/>
    </location>
</feature>
<dbReference type="EC" id="1.11.1.7"/>
<dbReference type="EMBL" id="AC007212">
    <property type="protein sequence ID" value="AAD31352.1"/>
    <property type="molecule type" value="Genomic_DNA"/>
</dbReference>
<dbReference type="EMBL" id="CP002685">
    <property type="protein sequence ID" value="AEC06730.1"/>
    <property type="molecule type" value="Genomic_DNA"/>
</dbReference>
<dbReference type="PIR" id="G84560">
    <property type="entry name" value="G84560"/>
</dbReference>
<dbReference type="RefSeq" id="NP_179406.1">
    <property type="nucleotide sequence ID" value="NM_127371.1"/>
</dbReference>
<dbReference type="SMR" id="Q9SI17"/>
<dbReference type="BioGRID" id="1684">
    <property type="interactions" value="1"/>
</dbReference>
<dbReference type="FunCoup" id="Q9SI17">
    <property type="interactions" value="127"/>
</dbReference>
<dbReference type="STRING" id="3702.Q9SI17"/>
<dbReference type="PeroxiBase" id="95">
    <property type="entry name" value="AtPrx14"/>
</dbReference>
<dbReference type="GlyCosmos" id="Q9SI17">
    <property type="glycosylation" value="4 sites, No reported glycans"/>
</dbReference>
<dbReference type="GlyGen" id="Q9SI17">
    <property type="glycosylation" value="4 sites"/>
</dbReference>
<dbReference type="PaxDb" id="3702-AT2G18140.1"/>
<dbReference type="ProteomicsDB" id="236455"/>
<dbReference type="EnsemblPlants" id="AT2G18140.1">
    <property type="protein sequence ID" value="AT2G18140.1"/>
    <property type="gene ID" value="AT2G18140"/>
</dbReference>
<dbReference type="GeneID" id="816327"/>
<dbReference type="Gramene" id="AT2G18140.1">
    <property type="protein sequence ID" value="AT2G18140.1"/>
    <property type="gene ID" value="AT2G18140"/>
</dbReference>
<dbReference type="KEGG" id="ath:AT2G18140"/>
<dbReference type="Araport" id="AT2G18140"/>
<dbReference type="TAIR" id="AT2G18140"/>
<dbReference type="eggNOG" id="ENOG502QR5A">
    <property type="taxonomic scope" value="Eukaryota"/>
</dbReference>
<dbReference type="HOGENOM" id="CLU_010543_0_1_1"/>
<dbReference type="InParanoid" id="Q9SI17"/>
<dbReference type="OMA" id="ICDNASN"/>
<dbReference type="PhylomeDB" id="Q9SI17"/>
<dbReference type="BioCyc" id="ARA:AT2G18140-MONOMER"/>
<dbReference type="PRO" id="PR:Q9SI17"/>
<dbReference type="Proteomes" id="UP000006548">
    <property type="component" value="Chromosome 2"/>
</dbReference>
<dbReference type="ExpressionAtlas" id="Q9SI17">
    <property type="expression patterns" value="baseline and differential"/>
</dbReference>
<dbReference type="GO" id="GO:0005576">
    <property type="term" value="C:extracellular region"/>
    <property type="evidence" value="ECO:0007669"/>
    <property type="project" value="UniProtKB-SubCell"/>
</dbReference>
<dbReference type="GO" id="GO:0020037">
    <property type="term" value="F:heme binding"/>
    <property type="evidence" value="ECO:0007669"/>
    <property type="project" value="InterPro"/>
</dbReference>
<dbReference type="GO" id="GO:0140825">
    <property type="term" value="F:lactoperoxidase activity"/>
    <property type="evidence" value="ECO:0007669"/>
    <property type="project" value="UniProtKB-EC"/>
</dbReference>
<dbReference type="GO" id="GO:0046872">
    <property type="term" value="F:metal ion binding"/>
    <property type="evidence" value="ECO:0007669"/>
    <property type="project" value="UniProtKB-KW"/>
</dbReference>
<dbReference type="GO" id="GO:0042744">
    <property type="term" value="P:hydrogen peroxide catabolic process"/>
    <property type="evidence" value="ECO:0007669"/>
    <property type="project" value="UniProtKB-KW"/>
</dbReference>
<dbReference type="GO" id="GO:0006979">
    <property type="term" value="P:response to oxidative stress"/>
    <property type="evidence" value="ECO:0007669"/>
    <property type="project" value="InterPro"/>
</dbReference>
<dbReference type="CDD" id="cd00693">
    <property type="entry name" value="secretory_peroxidase"/>
    <property type="match status" value="1"/>
</dbReference>
<dbReference type="FunFam" id="1.10.420.10:FF:000001">
    <property type="entry name" value="Peroxidase"/>
    <property type="match status" value="1"/>
</dbReference>
<dbReference type="FunFam" id="1.10.520.10:FF:000001">
    <property type="entry name" value="Peroxidase"/>
    <property type="match status" value="1"/>
</dbReference>
<dbReference type="Gene3D" id="1.10.520.10">
    <property type="match status" value="1"/>
</dbReference>
<dbReference type="Gene3D" id="1.10.420.10">
    <property type="entry name" value="Peroxidase, domain 2"/>
    <property type="match status" value="1"/>
</dbReference>
<dbReference type="InterPro" id="IPR002016">
    <property type="entry name" value="Haem_peroxidase"/>
</dbReference>
<dbReference type="InterPro" id="IPR010255">
    <property type="entry name" value="Haem_peroxidase_sf"/>
</dbReference>
<dbReference type="InterPro" id="IPR000823">
    <property type="entry name" value="Peroxidase_pln"/>
</dbReference>
<dbReference type="InterPro" id="IPR019794">
    <property type="entry name" value="Peroxidases_AS"/>
</dbReference>
<dbReference type="InterPro" id="IPR019793">
    <property type="entry name" value="Peroxidases_heam-ligand_BS"/>
</dbReference>
<dbReference type="InterPro" id="IPR033905">
    <property type="entry name" value="Secretory_peroxidase"/>
</dbReference>
<dbReference type="PANTHER" id="PTHR31388:SF104">
    <property type="entry name" value="PEROXIDASE 14-RELATED"/>
    <property type="match status" value="1"/>
</dbReference>
<dbReference type="PANTHER" id="PTHR31388">
    <property type="entry name" value="PEROXIDASE 72-RELATED"/>
    <property type="match status" value="1"/>
</dbReference>
<dbReference type="Pfam" id="PF00141">
    <property type="entry name" value="peroxidase"/>
    <property type="match status" value="1"/>
</dbReference>
<dbReference type="PRINTS" id="PR00458">
    <property type="entry name" value="PEROXIDASE"/>
</dbReference>
<dbReference type="PRINTS" id="PR00461">
    <property type="entry name" value="PLPEROXIDASE"/>
</dbReference>
<dbReference type="SUPFAM" id="SSF48113">
    <property type="entry name" value="Heme-dependent peroxidases"/>
    <property type="match status" value="1"/>
</dbReference>
<dbReference type="PROSITE" id="PS00435">
    <property type="entry name" value="PEROXIDASE_1"/>
    <property type="match status" value="1"/>
</dbReference>
<dbReference type="PROSITE" id="PS00436">
    <property type="entry name" value="PEROXIDASE_2"/>
    <property type="match status" value="1"/>
</dbReference>
<dbReference type="PROSITE" id="PS50873">
    <property type="entry name" value="PEROXIDASE_4"/>
    <property type="match status" value="1"/>
</dbReference>
<keyword id="KW-0106">Calcium</keyword>
<keyword id="KW-1015">Disulfide bond</keyword>
<keyword id="KW-0325">Glycoprotein</keyword>
<keyword id="KW-0349">Heme</keyword>
<keyword id="KW-0376">Hydrogen peroxide</keyword>
<keyword id="KW-0408">Iron</keyword>
<keyword id="KW-0479">Metal-binding</keyword>
<keyword id="KW-0560">Oxidoreductase</keyword>
<keyword id="KW-0575">Peroxidase</keyword>
<keyword id="KW-1185">Reference proteome</keyword>
<keyword id="KW-0964">Secreted</keyword>
<keyword id="KW-0732">Signal</keyword>
<gene>
    <name type="primary">PER14</name>
    <name type="synonym">P14</name>
    <name type="ordered locus">At2g18140</name>
    <name type="ORF">F8D23.8</name>
</gene>
<proteinExistence type="inferred from homology"/>
<protein>
    <recommendedName>
        <fullName>Peroxidase 14</fullName>
        <shortName>Atperox P14</shortName>
        <ecNumber>1.11.1.7</ecNumber>
    </recommendedName>
</protein>
<name>PER14_ARATH</name>